<dbReference type="EC" id="1.21.4.2"/>
<dbReference type="EC" id="1.21.4.3"/>
<dbReference type="EC" id="1.21.4.4"/>
<dbReference type="EMBL" id="M60399">
    <property type="protein sequence ID" value="AAB02347.2"/>
    <property type="molecule type" value="Genomic_DNA"/>
</dbReference>
<dbReference type="EMBL" id="AJ276209">
    <property type="protein sequence ID" value="CAC14300.1"/>
    <property type="molecule type" value="Genomic_DNA"/>
</dbReference>
<dbReference type="EMBL" id="FP565809">
    <property type="protein sequence ID" value="CBH21233.1"/>
    <property type="molecule type" value="Genomic_DNA"/>
</dbReference>
<dbReference type="PIR" id="A47011">
    <property type="entry name" value="A47011"/>
</dbReference>
<dbReference type="STRING" id="1511.CLOST_1112"/>
<dbReference type="KEGG" id="cst:CLOST_1112"/>
<dbReference type="eggNOG" id="ENOG50313TT">
    <property type="taxonomic scope" value="Bacteria"/>
</dbReference>
<dbReference type="HOGENOM" id="CLU_142275_0_0_9"/>
<dbReference type="BRENDA" id="1.21.4.2">
    <property type="organism ID" value="1522"/>
</dbReference>
<dbReference type="Proteomes" id="UP000007041">
    <property type="component" value="Chromosome"/>
</dbReference>
<dbReference type="GO" id="GO:0030700">
    <property type="term" value="C:glycine reductase complex"/>
    <property type="evidence" value="ECO:0007669"/>
    <property type="project" value="InterPro"/>
</dbReference>
<dbReference type="GO" id="GO:0033795">
    <property type="term" value="F:betaine reductase activity"/>
    <property type="evidence" value="ECO:0007669"/>
    <property type="project" value="UniProtKB-EC"/>
</dbReference>
<dbReference type="GO" id="GO:0030699">
    <property type="term" value="F:glycine reductase activity"/>
    <property type="evidence" value="ECO:0007669"/>
    <property type="project" value="UniProtKB-UniRule"/>
</dbReference>
<dbReference type="GO" id="GO:0033794">
    <property type="term" value="F:sarcosine reductase activity"/>
    <property type="evidence" value="ECO:0007669"/>
    <property type="project" value="UniProtKB-EC"/>
</dbReference>
<dbReference type="HAMAP" id="MF_00826">
    <property type="entry name" value="GRDA"/>
    <property type="match status" value="1"/>
</dbReference>
<dbReference type="InterPro" id="IPR006812">
    <property type="entry name" value="GRDA"/>
</dbReference>
<dbReference type="NCBIfam" id="NF040748">
    <property type="entry name" value="reduct_selen_A"/>
    <property type="match status" value="1"/>
</dbReference>
<dbReference type="Pfam" id="PF04723">
    <property type="entry name" value="GRDA"/>
    <property type="match status" value="1"/>
</dbReference>
<dbReference type="PIRSF" id="PIRSF000181">
    <property type="entry name" value="Grc_selenoprot_A"/>
    <property type="match status" value="1"/>
</dbReference>
<sequence length="158" mass="17140">MSRFTGKKIVIIGDRDGIPGPAIEECLKPIDCEVIFSSTECFVUTAAGAMDLENQKRIKEATEKFGAENLVVLIGAAEAEAAGLAAETVTAGDPTFAGPLAGVELGLRVYHAVEPEFKDEVDAQIFDDQVGMMEMVLNVDEIIEEMQSIRSQFCKFND</sequence>
<evidence type="ECO:0000269" key="1">
    <source>
    </source>
</evidence>
<evidence type="ECO:0000305" key="2"/>
<proteinExistence type="evidence at protein level"/>
<gene>
    <name type="primary">grdA</name>
    <name type="ordered locus">CLOST_1112</name>
</gene>
<comment type="function">
    <text>In the first step of glycine, betaine and sarcosine reductases, the substrate is bound to component PB via a Schiff base intermediate. Then the PB-activated substrate is nucleophilically attacked by the selenol anion of component PA to transform it to a carboxymethylated selenoether and the respective amine. By action of component PC, acetyl phosphate is formed, leaving component PA in its oxidized state. Finally component PA becomes reduced by the thioredoxin system to start a new catalytic cycle of reductive deamination.</text>
</comment>
<comment type="catalytic activity">
    <reaction>
        <text>acetyl phosphate + [thioredoxin]-disulfide + NH4(+) + H2O = [thioredoxin]-dithiol + glycine + phosphate + H(+)</text>
        <dbReference type="Rhea" id="RHEA:12232"/>
        <dbReference type="Rhea" id="RHEA-COMP:10698"/>
        <dbReference type="Rhea" id="RHEA-COMP:10700"/>
        <dbReference type="ChEBI" id="CHEBI:15377"/>
        <dbReference type="ChEBI" id="CHEBI:15378"/>
        <dbReference type="ChEBI" id="CHEBI:22191"/>
        <dbReference type="ChEBI" id="CHEBI:28938"/>
        <dbReference type="ChEBI" id="CHEBI:29950"/>
        <dbReference type="ChEBI" id="CHEBI:43474"/>
        <dbReference type="ChEBI" id="CHEBI:50058"/>
        <dbReference type="ChEBI" id="CHEBI:57305"/>
        <dbReference type="EC" id="1.21.4.2"/>
    </reaction>
</comment>
<comment type="catalytic activity">
    <reaction>
        <text>acetyl phosphate + methylamine + [thioredoxin]-disulfide + H2O = sarcosine + [thioredoxin]-dithiol + phosphate + H(+)</text>
        <dbReference type="Rhea" id="RHEA:12825"/>
        <dbReference type="Rhea" id="RHEA-COMP:10698"/>
        <dbReference type="Rhea" id="RHEA-COMP:10700"/>
        <dbReference type="ChEBI" id="CHEBI:15377"/>
        <dbReference type="ChEBI" id="CHEBI:15378"/>
        <dbReference type="ChEBI" id="CHEBI:22191"/>
        <dbReference type="ChEBI" id="CHEBI:29950"/>
        <dbReference type="ChEBI" id="CHEBI:43474"/>
        <dbReference type="ChEBI" id="CHEBI:50058"/>
        <dbReference type="ChEBI" id="CHEBI:57433"/>
        <dbReference type="ChEBI" id="CHEBI:59338"/>
        <dbReference type="EC" id="1.21.4.3"/>
    </reaction>
</comment>
<comment type="catalytic activity">
    <reaction>
        <text>acetyl phosphate + trimethylamine + [thioredoxin]-disulfide + H2O = glycine betaine + [thioredoxin]-dithiol + phosphate + H(+)</text>
        <dbReference type="Rhea" id="RHEA:11848"/>
        <dbReference type="Rhea" id="RHEA-COMP:10698"/>
        <dbReference type="Rhea" id="RHEA-COMP:10700"/>
        <dbReference type="ChEBI" id="CHEBI:15377"/>
        <dbReference type="ChEBI" id="CHEBI:15378"/>
        <dbReference type="ChEBI" id="CHEBI:17750"/>
        <dbReference type="ChEBI" id="CHEBI:22191"/>
        <dbReference type="ChEBI" id="CHEBI:29950"/>
        <dbReference type="ChEBI" id="CHEBI:43474"/>
        <dbReference type="ChEBI" id="CHEBI:50058"/>
        <dbReference type="ChEBI" id="CHEBI:58389"/>
        <dbReference type="EC" id="1.21.4.4"/>
    </reaction>
</comment>
<comment type="subunit">
    <text>Monomer. Component of the glycine, sarcosine and betaine reductase complexes, together with components B and C.</text>
</comment>
<comment type="similarity">
    <text evidence="2">Belongs to the GrdA family.</text>
</comment>
<name>GRDA_ACESD</name>
<reference key="1">
    <citation type="journal article" date="1992" name="J. Bacteriol.">
        <title>Clostridium sticklandii glycine reductase selenoprotein A gene: cloning, sequencing, and expression in Escherichia coli.</title>
        <authorList>
            <person name="Garcia G.E."/>
            <person name="Stadtman T.C."/>
        </authorList>
    </citation>
    <scope>NUCLEOTIDE SEQUENCE [GENOMIC DNA]</scope>
    <source>
        <strain>ATCC 12662 / DSM 519 / JCM 1433 / CCUG 9281 / NCIMB 10654 / HF</strain>
    </source>
</reference>
<reference key="2">
    <citation type="journal article" date="2001" name="Arch. Microbiol.">
        <title>Molecular analysis of the grd-operon encoded proteins of the glycine reductase and thioredoxin system from Clostridium sticklandii.</title>
        <authorList>
            <person name="Graentzdoerffer A."/>
            <person name="Pich A."/>
            <person name="Andreesen J.R."/>
        </authorList>
    </citation>
    <scope>NUCLEOTIDE SEQUENCE [GENOMIC DNA]</scope>
    <source>
        <strain>ATCC 12662 / DSM 519 / JCM 1433 / CCUG 9281 / NCIMB 10654 / HF</strain>
    </source>
</reference>
<reference key="3">
    <citation type="journal article" date="2010" name="BMC Genomics">
        <title>Clostridium sticklandii, a specialist in amino acid degradation:revisiting its metabolism through its genome sequence.</title>
        <authorList>
            <person name="Fonknechten N."/>
            <person name="Chaussonnerie S."/>
            <person name="Tricot S."/>
            <person name="Lajus A."/>
            <person name="Andreesen J.R."/>
            <person name="Perchat N."/>
            <person name="Pelletier E."/>
            <person name="Gouyvenoux M."/>
            <person name="Barbe V."/>
            <person name="Salanoubat M."/>
            <person name="Le Paslier D."/>
            <person name="Weissenbach J."/>
            <person name="Cohen G.N."/>
            <person name="Kreimeyer A."/>
        </authorList>
    </citation>
    <scope>NUCLEOTIDE SEQUENCE [LARGE SCALE GENOMIC DNA]</scope>
    <source>
        <strain>ATCC 12662 / DSM 519 / JCM 1433 / CCUG 9281 / NCIMB 10654 / HF</strain>
    </source>
</reference>
<reference key="4">
    <citation type="journal article" date="1995" name="Proc. Natl. Acad. Sci. U.S.A.">
        <title>Glycine reductase selenoprotein A is not a glycoprotein: the positive periodic acid-Schiff reagent test is the result of peptide bond cleavage and carbonyl group generation.</title>
        <authorList>
            <person name="Kimura Y."/>
            <person name="Stadtman T.C."/>
        </authorList>
    </citation>
    <scope>PROTEIN SEQUENCE OF 2-158</scope>
    <scope>SELENOCYSTEINE AT SEC-44</scope>
</reference>
<reference key="5">
    <citation type="journal article" date="1988" name="Proc. Natl. Acad. Sci. U.S.A.">
        <title>Selenoprotein A of the clostridial glycine reductase complex: purification and amino acid sequence of the selenocysteine-containing peptide.</title>
        <authorList>
            <person name="Sliwkowski M.X."/>
            <person name="Stadtman T.C."/>
        </authorList>
    </citation>
    <scope>PRELIMINARY PROTEIN SEQUENCE OF 41-56</scope>
    <scope>SELENOCYSTEINE AT SEC-44</scope>
</reference>
<feature type="initiator methionine" description="Removed" evidence="1">
    <location>
        <position position="1"/>
    </location>
</feature>
<feature type="chain" id="PRO_0000194466" description="Glycine/sarcosine/betaine reductase complex component A">
    <location>
        <begin position="2"/>
        <end position="158"/>
    </location>
</feature>
<feature type="active site">
    <location>
        <position position="44"/>
    </location>
</feature>
<feature type="non-standard amino acid" description="Selenocysteine">
    <location>
        <position position="44"/>
    </location>
</feature>
<accession>P26971</accession>
<accession>E3PXR8</accession>
<accession>Q7B074</accession>
<protein>
    <recommendedName>
        <fullName>Glycine/sarcosine/betaine reductase complex component A</fullName>
        <ecNumber>1.21.4.2</ecNumber>
        <ecNumber>1.21.4.3</ecNumber>
        <ecNumber>1.21.4.4</ecNumber>
    </recommendedName>
    <alternativeName>
        <fullName>Selenoprotein PA</fullName>
    </alternativeName>
    <alternativeName>
        <fullName>Thioredoxin reductase complex selenoprotein A</fullName>
    </alternativeName>
</protein>
<organism>
    <name type="scientific">Acetoanaerobium sticklandii (strain ATCC 12662 / DSM 519 / JCM 1433 / CCUG 9281 / NCIMB 10654 / HF)</name>
    <name type="common">Clostridium sticklandii</name>
    <dbReference type="NCBI Taxonomy" id="499177"/>
    <lineage>
        <taxon>Bacteria</taxon>
        <taxon>Bacillati</taxon>
        <taxon>Bacillota</taxon>
        <taxon>Clostridia</taxon>
        <taxon>Peptostreptococcales</taxon>
        <taxon>Filifactoraceae</taxon>
        <taxon>Acetoanaerobium</taxon>
    </lineage>
</organism>
<keyword id="KW-0903">Direct protein sequencing</keyword>
<keyword id="KW-0560">Oxidoreductase</keyword>
<keyword id="KW-1185">Reference proteome</keyword>
<keyword id="KW-0712">Selenocysteine</keyword>